<protein>
    <recommendedName>
        <fullName evidence="1">ATP synthase subunit c, chloroplastic</fullName>
    </recommendedName>
    <alternativeName>
        <fullName evidence="1">ATP synthase F(0) sector subunit c</fullName>
    </alternativeName>
    <alternativeName>
        <fullName evidence="1">ATPase subunit III</fullName>
    </alternativeName>
    <alternativeName>
        <fullName evidence="1">F-type ATPase subunit c</fullName>
        <shortName evidence="1">F-ATPase subunit c</shortName>
    </alternativeName>
    <alternativeName>
        <fullName evidence="1">Lipid-binding protein</fullName>
    </alternativeName>
</protein>
<gene>
    <name evidence="1" type="primary">atpH</name>
</gene>
<feature type="chain" id="PRO_0000362978" description="ATP synthase subunit c, chloroplastic">
    <location>
        <begin position="1"/>
        <end position="82"/>
    </location>
</feature>
<feature type="transmembrane region" description="Helical" evidence="1">
    <location>
        <begin position="4"/>
        <end position="24"/>
    </location>
</feature>
<feature type="transmembrane region" description="Helical" evidence="1">
    <location>
        <begin position="57"/>
        <end position="77"/>
    </location>
</feature>
<feature type="site" description="Reversibly protonated during proton transport" evidence="1">
    <location>
        <position position="61"/>
    </location>
</feature>
<comment type="function">
    <text evidence="1">F(1)F(0) ATP synthase produces ATP from ADP in the presence of a proton or sodium gradient. F-type ATPases consist of two structural domains, F(1) containing the extramembraneous catalytic core and F(0) containing the membrane proton channel, linked together by a central stalk and a peripheral stalk. During catalysis, ATP synthesis in the catalytic domain of F(1) is coupled via a rotary mechanism of the central stalk subunits to proton translocation.</text>
</comment>
<comment type="function">
    <text evidence="1">Key component of the F(0) channel; it plays a direct role in translocation across the membrane. A homomeric c-ring of between 10-14 subunits forms the central stalk rotor element with the F(1) delta and epsilon subunits.</text>
</comment>
<comment type="subunit">
    <text evidence="1">F-type ATPases have 2 components, F(1) - the catalytic core - and F(0) - the membrane proton channel. F(1) has five subunits: alpha(3), beta(3), gamma(1), delta(1), epsilon(1). F(0) has four main subunits: a(1), b(1), b'(1) and c(10-14). The alpha and beta chains form an alternating ring which encloses part of the gamma chain. F(1) is attached to F(0) by a central stalk formed by the gamma and epsilon chains, while a peripheral stalk is formed by the delta, b and b' chains.</text>
</comment>
<comment type="subcellular location">
    <subcellularLocation>
        <location evidence="1">Plastid</location>
        <location evidence="1">Chloroplast thylakoid membrane</location>
        <topology evidence="1">Multi-pass membrane protein</topology>
    </subcellularLocation>
</comment>
<comment type="miscellaneous">
    <text>In plastids the F-type ATPase is also known as CF(1)CF(0).</text>
</comment>
<comment type="similarity">
    <text evidence="1">Belongs to the ATPase C chain family.</text>
</comment>
<name>ATPH_THAPS</name>
<dbReference type="EMBL" id="EF067921">
    <property type="protein sequence ID" value="ABK20725.1"/>
    <property type="molecule type" value="Genomic_DNA"/>
</dbReference>
<dbReference type="RefSeq" id="YP_874502.1">
    <property type="nucleotide sequence ID" value="NC_008589.1"/>
</dbReference>
<dbReference type="SMR" id="A0T0P0"/>
<dbReference type="STRING" id="35128.A0T0P0"/>
<dbReference type="PaxDb" id="35128-Thapsdraft1290"/>
<dbReference type="GeneID" id="4524797"/>
<dbReference type="eggNOG" id="KOG0232">
    <property type="taxonomic scope" value="Eukaryota"/>
</dbReference>
<dbReference type="InParanoid" id="A0T0P0"/>
<dbReference type="OMA" id="QPELMNE"/>
<dbReference type="GO" id="GO:0009535">
    <property type="term" value="C:chloroplast thylakoid membrane"/>
    <property type="evidence" value="ECO:0007669"/>
    <property type="project" value="UniProtKB-SubCell"/>
</dbReference>
<dbReference type="GO" id="GO:0045259">
    <property type="term" value="C:proton-transporting ATP synthase complex"/>
    <property type="evidence" value="ECO:0007669"/>
    <property type="project" value="UniProtKB-KW"/>
</dbReference>
<dbReference type="GO" id="GO:0033177">
    <property type="term" value="C:proton-transporting two-sector ATPase complex, proton-transporting domain"/>
    <property type="evidence" value="ECO:0007669"/>
    <property type="project" value="InterPro"/>
</dbReference>
<dbReference type="GO" id="GO:0008289">
    <property type="term" value="F:lipid binding"/>
    <property type="evidence" value="ECO:0007669"/>
    <property type="project" value="UniProtKB-KW"/>
</dbReference>
<dbReference type="GO" id="GO:0046933">
    <property type="term" value="F:proton-transporting ATP synthase activity, rotational mechanism"/>
    <property type="evidence" value="ECO:0007669"/>
    <property type="project" value="UniProtKB-UniRule"/>
</dbReference>
<dbReference type="GO" id="GO:0015986">
    <property type="term" value="P:proton motive force-driven ATP synthesis"/>
    <property type="evidence" value="ECO:0000318"/>
    <property type="project" value="GO_Central"/>
</dbReference>
<dbReference type="CDD" id="cd18183">
    <property type="entry name" value="ATP-synt_Fo_c_ATPH"/>
    <property type="match status" value="1"/>
</dbReference>
<dbReference type="FunFam" id="1.20.20.10:FF:000001">
    <property type="entry name" value="ATP synthase subunit c, chloroplastic"/>
    <property type="match status" value="1"/>
</dbReference>
<dbReference type="Gene3D" id="1.20.20.10">
    <property type="entry name" value="F1F0 ATP synthase subunit C"/>
    <property type="match status" value="1"/>
</dbReference>
<dbReference type="HAMAP" id="MF_01396">
    <property type="entry name" value="ATP_synth_c_bact"/>
    <property type="match status" value="1"/>
</dbReference>
<dbReference type="InterPro" id="IPR005953">
    <property type="entry name" value="ATP_synth_csu_bac/chlpt"/>
</dbReference>
<dbReference type="InterPro" id="IPR000454">
    <property type="entry name" value="ATP_synth_F0_csu"/>
</dbReference>
<dbReference type="InterPro" id="IPR020537">
    <property type="entry name" value="ATP_synth_F0_csu_DDCD_BS"/>
</dbReference>
<dbReference type="InterPro" id="IPR038662">
    <property type="entry name" value="ATP_synth_F0_csu_sf"/>
</dbReference>
<dbReference type="InterPro" id="IPR002379">
    <property type="entry name" value="ATPase_proteolipid_c-like_dom"/>
</dbReference>
<dbReference type="InterPro" id="IPR035921">
    <property type="entry name" value="F/V-ATP_Csub_sf"/>
</dbReference>
<dbReference type="NCBIfam" id="TIGR01260">
    <property type="entry name" value="ATP_synt_c"/>
    <property type="match status" value="1"/>
</dbReference>
<dbReference type="NCBIfam" id="NF005608">
    <property type="entry name" value="PRK07354.1"/>
    <property type="match status" value="1"/>
</dbReference>
<dbReference type="PANTHER" id="PTHR10031">
    <property type="entry name" value="ATP SYNTHASE LIPID-BINDING PROTEIN, MITOCHONDRIAL"/>
    <property type="match status" value="1"/>
</dbReference>
<dbReference type="PANTHER" id="PTHR10031:SF0">
    <property type="entry name" value="ATPASE PROTEIN 9"/>
    <property type="match status" value="1"/>
</dbReference>
<dbReference type="Pfam" id="PF00137">
    <property type="entry name" value="ATP-synt_C"/>
    <property type="match status" value="1"/>
</dbReference>
<dbReference type="PRINTS" id="PR00124">
    <property type="entry name" value="ATPASEC"/>
</dbReference>
<dbReference type="SUPFAM" id="SSF81333">
    <property type="entry name" value="F1F0 ATP synthase subunit C"/>
    <property type="match status" value="1"/>
</dbReference>
<dbReference type="PROSITE" id="PS00605">
    <property type="entry name" value="ATPASE_C"/>
    <property type="match status" value="1"/>
</dbReference>
<evidence type="ECO:0000255" key="1">
    <source>
        <dbReference type="HAMAP-Rule" id="MF_01396"/>
    </source>
</evidence>
<reference key="1">
    <citation type="journal article" date="2007" name="Mol. Genet. Genomics">
        <title>Chloroplast genomes of the diatoms Phaeodactylum tricornutum and Thalassiosira pseudonana: comparison with other plastid genomes of the red lineage.</title>
        <authorList>
            <person name="Oudot-Le Secq M.-P."/>
            <person name="Grimwood J."/>
            <person name="Shapiro H."/>
            <person name="Armbrust E.V."/>
            <person name="Bowler C."/>
            <person name="Green B.R."/>
        </authorList>
    </citation>
    <scope>NUCLEOTIDE SEQUENCE [LARGE SCALE GENOMIC DNA]</scope>
    <source>
        <strain>CCMP1335 / NEPCC58 / CCAP 1085/12</strain>
    </source>
</reference>
<organism>
    <name type="scientific">Thalassiosira pseudonana</name>
    <name type="common">Marine diatom</name>
    <name type="synonym">Cyclotella nana</name>
    <dbReference type="NCBI Taxonomy" id="35128"/>
    <lineage>
        <taxon>Eukaryota</taxon>
        <taxon>Sar</taxon>
        <taxon>Stramenopiles</taxon>
        <taxon>Ochrophyta</taxon>
        <taxon>Bacillariophyta</taxon>
        <taxon>Coscinodiscophyceae</taxon>
        <taxon>Thalassiosirophycidae</taxon>
        <taxon>Thalassiosirales</taxon>
        <taxon>Thalassiosiraceae</taxon>
        <taxon>Thalassiosira</taxon>
    </lineage>
</organism>
<sequence>MDSIISAASVIAAGLAIGLAAIGPGIGQGNAAGQAVEGIARQPEAENKIRGTLLLSLAFMEALTIYGLVVALALLFANPFNS</sequence>
<accession>A0T0P0</accession>
<proteinExistence type="inferred from homology"/>
<keyword id="KW-0066">ATP synthesis</keyword>
<keyword id="KW-0138">CF(0)</keyword>
<keyword id="KW-0150">Chloroplast</keyword>
<keyword id="KW-0375">Hydrogen ion transport</keyword>
<keyword id="KW-0406">Ion transport</keyword>
<keyword id="KW-0446">Lipid-binding</keyword>
<keyword id="KW-0472">Membrane</keyword>
<keyword id="KW-0934">Plastid</keyword>
<keyword id="KW-0793">Thylakoid</keyword>
<keyword id="KW-0812">Transmembrane</keyword>
<keyword id="KW-1133">Transmembrane helix</keyword>
<keyword id="KW-0813">Transport</keyword>
<geneLocation type="chloroplast"/>